<name>TRMB_CHAGB</name>
<evidence type="ECO:0000255" key="1">
    <source>
        <dbReference type="HAMAP-Rule" id="MF_03055"/>
    </source>
</evidence>
<evidence type="ECO:0000256" key="2">
    <source>
        <dbReference type="SAM" id="MobiDB-lite"/>
    </source>
</evidence>
<keyword id="KW-0489">Methyltransferase</keyword>
<keyword id="KW-0539">Nucleus</keyword>
<keyword id="KW-1185">Reference proteome</keyword>
<keyword id="KW-0694">RNA-binding</keyword>
<keyword id="KW-0949">S-adenosyl-L-methionine</keyword>
<keyword id="KW-0808">Transferase</keyword>
<keyword id="KW-0819">tRNA processing</keyword>
<keyword id="KW-0820">tRNA-binding</keyword>
<reference key="1">
    <citation type="journal article" date="2015" name="Genome Announc.">
        <title>Draft genome sequence of the cellulolytic fungus Chaetomium globosum.</title>
        <authorList>
            <person name="Cuomo C.A."/>
            <person name="Untereiner W.A."/>
            <person name="Ma L.-J."/>
            <person name="Grabherr M."/>
            <person name="Birren B.W."/>
        </authorList>
    </citation>
    <scope>NUCLEOTIDE SEQUENCE [LARGE SCALE GENOMIC DNA]</scope>
    <source>
        <strain>ATCC 6205 / CBS 148.51 / DSM 1962 / NBRC 6347 / NRRL 1970</strain>
    </source>
</reference>
<dbReference type="EC" id="2.1.1.33" evidence="1"/>
<dbReference type="EMBL" id="CH408034">
    <property type="protein sequence ID" value="EAQ85154.1"/>
    <property type="molecule type" value="Genomic_DNA"/>
</dbReference>
<dbReference type="RefSeq" id="XP_001227095.1">
    <property type="nucleotide sequence ID" value="XM_001227094.1"/>
</dbReference>
<dbReference type="SMR" id="Q2GS86"/>
<dbReference type="FunCoup" id="Q2GS86">
    <property type="interactions" value="478"/>
</dbReference>
<dbReference type="STRING" id="306901.Q2GS86"/>
<dbReference type="GeneID" id="4395245"/>
<dbReference type="VEuPathDB" id="FungiDB:CHGG_09168"/>
<dbReference type="eggNOG" id="KOG3115">
    <property type="taxonomic scope" value="Eukaryota"/>
</dbReference>
<dbReference type="HOGENOM" id="CLU_050910_3_1_1"/>
<dbReference type="InParanoid" id="Q2GS86"/>
<dbReference type="OMA" id="LPNYFAK"/>
<dbReference type="OrthoDB" id="47276at2759"/>
<dbReference type="UniPathway" id="UPA00989"/>
<dbReference type="Proteomes" id="UP000001056">
    <property type="component" value="Unassembled WGS sequence"/>
</dbReference>
<dbReference type="GO" id="GO:0005634">
    <property type="term" value="C:nucleus"/>
    <property type="evidence" value="ECO:0007669"/>
    <property type="project" value="UniProtKB-SubCell"/>
</dbReference>
<dbReference type="GO" id="GO:0043527">
    <property type="term" value="C:tRNA methyltransferase complex"/>
    <property type="evidence" value="ECO:0007669"/>
    <property type="project" value="TreeGrafter"/>
</dbReference>
<dbReference type="GO" id="GO:0008176">
    <property type="term" value="F:tRNA (guanine(46)-N7)-methyltransferase activity"/>
    <property type="evidence" value="ECO:0007669"/>
    <property type="project" value="UniProtKB-UniRule"/>
</dbReference>
<dbReference type="GO" id="GO:0000049">
    <property type="term" value="F:tRNA binding"/>
    <property type="evidence" value="ECO:0007669"/>
    <property type="project" value="UniProtKB-UniRule"/>
</dbReference>
<dbReference type="CDD" id="cd02440">
    <property type="entry name" value="AdoMet_MTases"/>
    <property type="match status" value="1"/>
</dbReference>
<dbReference type="FunFam" id="3.40.50.150:FF:000060">
    <property type="entry name" value="tRNA (guanine-N(7)-)-methyltransferase"/>
    <property type="match status" value="1"/>
</dbReference>
<dbReference type="Gene3D" id="3.40.50.150">
    <property type="entry name" value="Vaccinia Virus protein VP39"/>
    <property type="match status" value="1"/>
</dbReference>
<dbReference type="HAMAP" id="MF_03055">
    <property type="entry name" value="tRNA_methyltr_TrmB_euk"/>
    <property type="match status" value="1"/>
</dbReference>
<dbReference type="InterPro" id="IPR029063">
    <property type="entry name" value="SAM-dependent_MTases_sf"/>
</dbReference>
<dbReference type="InterPro" id="IPR025763">
    <property type="entry name" value="Trm8_euk"/>
</dbReference>
<dbReference type="InterPro" id="IPR003358">
    <property type="entry name" value="tRNA_(Gua-N-7)_MeTrfase_Trmb"/>
</dbReference>
<dbReference type="NCBIfam" id="TIGR00091">
    <property type="entry name" value="tRNA (guanosine(46)-N7)-methyltransferase TrmB"/>
    <property type="match status" value="1"/>
</dbReference>
<dbReference type="PANTHER" id="PTHR23417">
    <property type="entry name" value="3-DEOXY-D-MANNO-OCTULOSONIC-ACID TRANSFERASE/TRNA GUANINE-N 7 - -METHYLTRANSFERASE"/>
    <property type="match status" value="1"/>
</dbReference>
<dbReference type="PANTHER" id="PTHR23417:SF16">
    <property type="entry name" value="TRNA (GUANINE-N(7)-)-METHYLTRANSFERASE"/>
    <property type="match status" value="1"/>
</dbReference>
<dbReference type="Pfam" id="PF02390">
    <property type="entry name" value="Methyltransf_4"/>
    <property type="match status" value="1"/>
</dbReference>
<dbReference type="SUPFAM" id="SSF53335">
    <property type="entry name" value="S-adenosyl-L-methionine-dependent methyltransferases"/>
    <property type="match status" value="1"/>
</dbReference>
<dbReference type="PROSITE" id="PS51625">
    <property type="entry name" value="SAM_MT_TRMB"/>
    <property type="match status" value="1"/>
</dbReference>
<gene>
    <name evidence="1" type="primary">TRM8</name>
    <name type="ORF">CHGG_09168</name>
</gene>
<feature type="chain" id="PRO_0000370593" description="tRNA (guanine-N(7)-)-methyltransferase">
    <location>
        <begin position="1"/>
        <end position="293"/>
    </location>
</feature>
<feature type="region of interest" description="Disordered" evidence="2">
    <location>
        <begin position="1"/>
        <end position="33"/>
    </location>
</feature>
<feature type="region of interest" description="Disordered" evidence="2">
    <location>
        <begin position="68"/>
        <end position="97"/>
    </location>
</feature>
<feature type="compositionally biased region" description="Basic and acidic residues" evidence="2">
    <location>
        <begin position="1"/>
        <end position="31"/>
    </location>
</feature>
<feature type="compositionally biased region" description="Pro residues" evidence="2">
    <location>
        <begin position="75"/>
        <end position="85"/>
    </location>
</feature>
<feature type="active site" evidence="1">
    <location>
        <position position="192"/>
    </location>
</feature>
<feature type="binding site" evidence="1">
    <location>
        <position position="111"/>
    </location>
    <ligand>
        <name>S-adenosyl-L-methionine</name>
        <dbReference type="ChEBI" id="CHEBI:59789"/>
    </ligand>
</feature>
<feature type="binding site" evidence="1">
    <location>
        <begin position="134"/>
        <end position="135"/>
    </location>
    <ligand>
        <name>S-adenosyl-L-methionine</name>
        <dbReference type="ChEBI" id="CHEBI:59789"/>
    </ligand>
</feature>
<feature type="binding site" evidence="1">
    <location>
        <begin position="169"/>
        <end position="170"/>
    </location>
    <ligand>
        <name>S-adenosyl-L-methionine</name>
        <dbReference type="ChEBI" id="CHEBI:59789"/>
    </ligand>
</feature>
<feature type="binding site" evidence="1">
    <location>
        <position position="189"/>
    </location>
    <ligand>
        <name>S-adenosyl-L-methionine</name>
        <dbReference type="ChEBI" id="CHEBI:59789"/>
    </ligand>
</feature>
<feature type="binding site" evidence="1">
    <location>
        <begin position="267"/>
        <end position="269"/>
    </location>
    <ligand>
        <name>S-adenosyl-L-methionine</name>
        <dbReference type="ChEBI" id="CHEBI:59789"/>
    </ligand>
</feature>
<comment type="function">
    <text evidence="1">Catalyzes the formation of N(7)-methylguanine at position 46 (m7G46) in tRNA.</text>
</comment>
<comment type="catalytic activity">
    <reaction evidence="1">
        <text>guanosine(46) in tRNA + S-adenosyl-L-methionine = N(7)-methylguanosine(46) in tRNA + S-adenosyl-L-homocysteine</text>
        <dbReference type="Rhea" id="RHEA:42708"/>
        <dbReference type="Rhea" id="RHEA-COMP:10188"/>
        <dbReference type="Rhea" id="RHEA-COMP:10189"/>
        <dbReference type="ChEBI" id="CHEBI:57856"/>
        <dbReference type="ChEBI" id="CHEBI:59789"/>
        <dbReference type="ChEBI" id="CHEBI:74269"/>
        <dbReference type="ChEBI" id="CHEBI:74480"/>
        <dbReference type="EC" id="2.1.1.33"/>
    </reaction>
</comment>
<comment type="pathway">
    <text evidence="1">tRNA modification; N(7)-methylguanine-tRNA biosynthesis.</text>
</comment>
<comment type="subunit">
    <text evidence="1">Forms a complex with TRM82.</text>
</comment>
<comment type="subcellular location">
    <subcellularLocation>
        <location evidence="1">Nucleus</location>
    </subcellularLocation>
</comment>
<comment type="similarity">
    <text evidence="1">Belongs to the class I-like SAM-binding methyltransferase superfamily. TrmB family.</text>
</comment>
<proteinExistence type="inferred from homology"/>
<protein>
    <recommendedName>
        <fullName evidence="1">tRNA (guanine-N(7)-)-methyltransferase</fullName>
        <ecNumber evidence="1">2.1.1.33</ecNumber>
    </recommendedName>
    <alternativeName>
        <fullName evidence="1">Transfer RNA methyltransferase 8</fullName>
    </alternativeName>
    <alternativeName>
        <fullName evidence="1">tRNA (guanine(46)-N(7))-methyltransferase</fullName>
    </alternativeName>
    <alternativeName>
        <fullName evidence="1">tRNA(m7G46)-methyltransferase</fullName>
    </alternativeName>
</protein>
<organism>
    <name type="scientific">Chaetomium globosum (strain ATCC 6205 / CBS 148.51 / DSM 1962 / NBRC 6347 / NRRL 1970)</name>
    <name type="common">Soil fungus</name>
    <dbReference type="NCBI Taxonomy" id="306901"/>
    <lineage>
        <taxon>Eukaryota</taxon>
        <taxon>Fungi</taxon>
        <taxon>Dikarya</taxon>
        <taxon>Ascomycota</taxon>
        <taxon>Pezizomycotina</taxon>
        <taxon>Sordariomycetes</taxon>
        <taxon>Sordariomycetidae</taxon>
        <taxon>Sordariales</taxon>
        <taxon>Chaetomiaceae</taxon>
        <taxon>Chaetomium</taxon>
    </lineage>
</organism>
<accession>Q2GS86</accession>
<sequence length="293" mass="33667">MGGDKIKKDKRQKREDYRAAMRKDDISELPRKKFYRQRAHANPFSDHQLIYPPHPDQMDWSSLYPHYIVDEPTTTSPPPPPPVPEQTPSEPDLTPLRPKPLSKEVSVADIGCGFGGLLIALAPTMPEALILGLEIRVSVTHFVEDRIKALRAQNQAAGLYRNVGVLRANTMKFLPNFFRKAQLEKVFICFPDPHFKIRKHKQRIVSTTLNSEYAYVVKPGGIVYTITDVLDLHEWMVQHFDAHPSFERVSEEEQEADPCVAIMRTETEEGKKVERHKGEKHVALFRRLEDPAW</sequence>